<keyword id="KW-0285">Flavoprotein</keyword>
<keyword id="KW-0288">FMN</keyword>
<keyword id="KW-0521">NADP</keyword>
<keyword id="KW-0560">Oxidoreductase</keyword>
<keyword id="KW-0694">RNA-binding</keyword>
<keyword id="KW-0819">tRNA processing</keyword>
<keyword id="KW-0820">tRNA-binding</keyword>
<gene>
    <name type="primary">dus</name>
    <name type="ordered locus">RC0011</name>
</gene>
<protein>
    <recommendedName>
        <fullName>Probable tRNA-dihydrouridine synthase</fullName>
        <ecNumber>1.3.1.-</ecNumber>
    </recommendedName>
</protein>
<proteinExistence type="inferred from homology"/>
<dbReference type="EC" id="1.3.1.-"/>
<dbReference type="EMBL" id="AE006914">
    <property type="protein sequence ID" value="AAL02549.1"/>
    <property type="status" value="ALT_INIT"/>
    <property type="molecule type" value="Genomic_DNA"/>
</dbReference>
<dbReference type="PIR" id="C97701">
    <property type="entry name" value="C97701"/>
</dbReference>
<dbReference type="SMR" id="Q92JQ6"/>
<dbReference type="GeneID" id="928651"/>
<dbReference type="KEGG" id="rco:RC0011"/>
<dbReference type="PATRIC" id="fig|272944.4.peg.11"/>
<dbReference type="HOGENOM" id="CLU_013299_0_1_5"/>
<dbReference type="Proteomes" id="UP000000816">
    <property type="component" value="Chromosome"/>
</dbReference>
<dbReference type="GO" id="GO:0050660">
    <property type="term" value="F:flavin adenine dinucleotide binding"/>
    <property type="evidence" value="ECO:0007669"/>
    <property type="project" value="InterPro"/>
</dbReference>
<dbReference type="GO" id="GO:0000049">
    <property type="term" value="F:tRNA binding"/>
    <property type="evidence" value="ECO:0007669"/>
    <property type="project" value="UniProtKB-KW"/>
</dbReference>
<dbReference type="GO" id="GO:0017150">
    <property type="term" value="F:tRNA dihydrouridine synthase activity"/>
    <property type="evidence" value="ECO:0007669"/>
    <property type="project" value="InterPro"/>
</dbReference>
<dbReference type="CDD" id="cd02801">
    <property type="entry name" value="DUS_like_FMN"/>
    <property type="match status" value="1"/>
</dbReference>
<dbReference type="Gene3D" id="3.20.20.70">
    <property type="entry name" value="Aldolase class I"/>
    <property type="match status" value="1"/>
</dbReference>
<dbReference type="Gene3D" id="1.10.1200.80">
    <property type="entry name" value="Putative flavin oxidoreducatase, domain 2"/>
    <property type="match status" value="1"/>
</dbReference>
<dbReference type="InterPro" id="IPR013785">
    <property type="entry name" value="Aldolase_TIM"/>
</dbReference>
<dbReference type="InterPro" id="IPR035587">
    <property type="entry name" value="DUS-like_FMN-bd"/>
</dbReference>
<dbReference type="InterPro" id="IPR001269">
    <property type="entry name" value="DUS_fam"/>
</dbReference>
<dbReference type="InterPro" id="IPR004652">
    <property type="entry name" value="DusB-like"/>
</dbReference>
<dbReference type="InterPro" id="IPR024036">
    <property type="entry name" value="tRNA-dHydroUridine_Synthase_C"/>
</dbReference>
<dbReference type="InterPro" id="IPR018517">
    <property type="entry name" value="tRNA_hU_synthase_CS"/>
</dbReference>
<dbReference type="NCBIfam" id="TIGR00737">
    <property type="entry name" value="nifR3_yhdG"/>
    <property type="match status" value="1"/>
</dbReference>
<dbReference type="PANTHER" id="PTHR45846">
    <property type="entry name" value="TRNA-DIHYDROURIDINE(47) SYNTHASE [NAD(P)(+)]-LIKE"/>
    <property type="match status" value="1"/>
</dbReference>
<dbReference type="PANTHER" id="PTHR45846:SF1">
    <property type="entry name" value="TRNA-DIHYDROURIDINE(47) SYNTHASE [NAD(P)(+)]-LIKE"/>
    <property type="match status" value="1"/>
</dbReference>
<dbReference type="Pfam" id="PF01207">
    <property type="entry name" value="Dus"/>
    <property type="match status" value="1"/>
</dbReference>
<dbReference type="PIRSF" id="PIRSF006621">
    <property type="entry name" value="Dus"/>
    <property type="match status" value="1"/>
</dbReference>
<dbReference type="SUPFAM" id="SSF51395">
    <property type="entry name" value="FMN-linked oxidoreductases"/>
    <property type="match status" value="1"/>
</dbReference>
<dbReference type="PROSITE" id="PS01136">
    <property type="entry name" value="UPF0034"/>
    <property type="match status" value="1"/>
</dbReference>
<feature type="chain" id="PRO_0000162140" description="Probable tRNA-dihydrouridine synthase">
    <location>
        <begin position="1"/>
        <end position="331"/>
    </location>
</feature>
<feature type="active site" description="Proton donor" evidence="2">
    <location>
        <position position="102"/>
    </location>
</feature>
<feature type="binding site" evidence="1">
    <location>
        <begin position="17"/>
        <end position="19"/>
    </location>
    <ligand>
        <name>FMN</name>
        <dbReference type="ChEBI" id="CHEBI:58210"/>
    </ligand>
</feature>
<feature type="binding site" evidence="1">
    <location>
        <position position="72"/>
    </location>
    <ligand>
        <name>FMN</name>
        <dbReference type="ChEBI" id="CHEBI:58210"/>
    </ligand>
</feature>
<feature type="binding site" evidence="1">
    <location>
        <position position="141"/>
    </location>
    <ligand>
        <name>FMN</name>
        <dbReference type="ChEBI" id="CHEBI:58210"/>
    </ligand>
</feature>
<feature type="binding site" evidence="1">
    <location>
        <begin position="202"/>
        <end position="204"/>
    </location>
    <ligand>
        <name>FMN</name>
        <dbReference type="ChEBI" id="CHEBI:58210"/>
    </ligand>
</feature>
<feature type="binding site" evidence="1">
    <location>
        <begin position="226"/>
        <end position="227"/>
    </location>
    <ligand>
        <name>FMN</name>
        <dbReference type="ChEBI" id="CHEBI:58210"/>
    </ligand>
</feature>
<accession>Q92JQ6</accession>
<comment type="function">
    <text evidence="1">Catalyzes the synthesis of 5,6-dihydrouridine (D), a modified base found in the D-loop of most tRNAs, via the reduction of the C5-C6 double bond in target uridines.</text>
</comment>
<comment type="catalytic activity">
    <reaction evidence="1">
        <text>a 5,6-dihydrouridine in tRNA + NAD(+) = a uridine in tRNA + NADH + H(+)</text>
        <dbReference type="Rhea" id="RHEA:54452"/>
        <dbReference type="Rhea" id="RHEA-COMP:13339"/>
        <dbReference type="Rhea" id="RHEA-COMP:13887"/>
        <dbReference type="ChEBI" id="CHEBI:15378"/>
        <dbReference type="ChEBI" id="CHEBI:57540"/>
        <dbReference type="ChEBI" id="CHEBI:57945"/>
        <dbReference type="ChEBI" id="CHEBI:65315"/>
        <dbReference type="ChEBI" id="CHEBI:74443"/>
    </reaction>
</comment>
<comment type="catalytic activity">
    <reaction evidence="1">
        <text>a 5,6-dihydrouridine in tRNA + NADP(+) = a uridine in tRNA + NADPH + H(+)</text>
        <dbReference type="Rhea" id="RHEA:23624"/>
        <dbReference type="Rhea" id="RHEA-COMP:13339"/>
        <dbReference type="Rhea" id="RHEA-COMP:13887"/>
        <dbReference type="ChEBI" id="CHEBI:15378"/>
        <dbReference type="ChEBI" id="CHEBI:57783"/>
        <dbReference type="ChEBI" id="CHEBI:58349"/>
        <dbReference type="ChEBI" id="CHEBI:65315"/>
        <dbReference type="ChEBI" id="CHEBI:74443"/>
    </reaction>
</comment>
<comment type="cofactor">
    <cofactor evidence="1">
        <name>FMN</name>
        <dbReference type="ChEBI" id="CHEBI:58210"/>
    </cofactor>
</comment>
<comment type="similarity">
    <text evidence="3">Belongs to the Dus family.</text>
</comment>
<comment type="sequence caution" evidence="3">
    <conflict type="erroneous initiation">
        <sequence resource="EMBL-CDS" id="AAL02549"/>
    </conflict>
</comment>
<name>DUS_RICCN</name>
<reference key="1">
    <citation type="journal article" date="2001" name="Science">
        <title>Mechanisms of evolution in Rickettsia conorii and R. prowazekii.</title>
        <authorList>
            <person name="Ogata H."/>
            <person name="Audic S."/>
            <person name="Renesto-Audiffren P."/>
            <person name="Fournier P.-E."/>
            <person name="Barbe V."/>
            <person name="Samson D."/>
            <person name="Roux V."/>
            <person name="Cossart P."/>
            <person name="Weissenbach J."/>
            <person name="Claverie J.-M."/>
            <person name="Raoult D."/>
        </authorList>
    </citation>
    <scope>NUCLEOTIDE SEQUENCE [LARGE SCALE GENOMIC DNA]</scope>
    <source>
        <strain>ATCC VR-613 / Malish 7</strain>
    </source>
</reference>
<sequence>MIKIGNIELSSNIILAPMSGVTDLEFRRLVKRFGAGLVVSEMVASRAMIVESRQSLKKSAIMRDDATSACVQLAGCEPNVIAEAAKMNEGMGAKIIDLNFGCPAKKVVGGYSGSALMKDEQLAAKIFEATVEAVKLPVTVKMRMGWDDNTKNAPTLAKIAESSGVQMITVHGRTRCQFYSGNADWDFIRSVKESVKIPVIANGDITNFAKAKEALQKSGADGIMVGRGAYGKPWLISQIDHYLKTGEEKSAPSIAEQLDIVTEHYEAILDYYGESVGVPIARKHIGWYSSGLPNSAEFRGAVNLMNDPLAVKEKIAEFYTSVMETNKLKEF</sequence>
<organism>
    <name type="scientific">Rickettsia conorii (strain ATCC VR-613 / Malish 7)</name>
    <dbReference type="NCBI Taxonomy" id="272944"/>
    <lineage>
        <taxon>Bacteria</taxon>
        <taxon>Pseudomonadati</taxon>
        <taxon>Pseudomonadota</taxon>
        <taxon>Alphaproteobacteria</taxon>
        <taxon>Rickettsiales</taxon>
        <taxon>Rickettsiaceae</taxon>
        <taxon>Rickettsieae</taxon>
        <taxon>Rickettsia</taxon>
        <taxon>spotted fever group</taxon>
    </lineage>
</organism>
<evidence type="ECO:0000250" key="1">
    <source>
        <dbReference type="UniProtKB" id="P33371"/>
    </source>
</evidence>
<evidence type="ECO:0000250" key="2">
    <source>
        <dbReference type="UniProtKB" id="Q5SMC7"/>
    </source>
</evidence>
<evidence type="ECO:0000305" key="3"/>